<accession>Q88W26</accession>
<accession>F9UPH9</accession>
<organism>
    <name type="scientific">Lactiplantibacillus plantarum (strain ATCC BAA-793 / NCIMB 8826 / WCFS1)</name>
    <name type="common">Lactobacillus plantarum</name>
    <dbReference type="NCBI Taxonomy" id="220668"/>
    <lineage>
        <taxon>Bacteria</taxon>
        <taxon>Bacillati</taxon>
        <taxon>Bacillota</taxon>
        <taxon>Bacilli</taxon>
        <taxon>Lactobacillales</taxon>
        <taxon>Lactobacillaceae</taxon>
        <taxon>Lactiplantibacillus</taxon>
    </lineage>
</organism>
<sequence length="472" mass="52615">MEEINKTPKQIVAALDNYVIGQNQAKKAVAIALRNRYRRMELSAEMQEEITPKNMLMIGPTGVGKTEIARRLAKIVHAPFVKVEATKFTEVGYVGRDVESMVRDLVDVAIEMEKQQAYSGVRAQAVQAADKRLVKLLVPAQKKQAKNNGNEFQNMMNMFSQMQNGQTPNVDDSSNEEVTDEVRNQRLSVADQLKTGRLENSEVTIEMDDPQQAAAGNNNMLGQMGIDLGDSLGALMPKKRIQRTMPVSEAREILVREESEKLVNNADIYHDAIVRAENTGIIFIDEIDKITKGGQQGSGEVSREGVQRDILPIVEGSQISTKYGPINTDHILFIASGAFAESKPSDLIAELQGRFPIRVELDDLSKDDFVKILTEPKNALIKQYIALIGTDNIKVTFTIEAIEAIATIAYKVNHETQNIGARRLHTILEKLLEELLYEGPDMEMGEVTITESYVNERIGNIAQDKDLSRYIL</sequence>
<comment type="function">
    <text evidence="1">ATPase subunit of a proteasome-like degradation complex; this subunit has chaperone activity. The binding of ATP and its subsequent hydrolysis by HslU are essential for unfolding of protein substrates subsequently hydrolyzed by HslV. HslU recognizes the N-terminal part of its protein substrates and unfolds these before they are guided to HslV for hydrolysis.</text>
</comment>
<comment type="subunit">
    <text evidence="1">A double ring-shaped homohexamer of HslV is capped on each side by a ring-shaped HslU homohexamer. The assembly of the HslU/HslV complex is dependent on binding of ATP.</text>
</comment>
<comment type="subcellular location">
    <subcellularLocation>
        <location evidence="1">Cytoplasm</location>
    </subcellularLocation>
</comment>
<comment type="similarity">
    <text evidence="1">Belongs to the ClpX chaperone family. HslU subfamily.</text>
</comment>
<proteinExistence type="inferred from homology"/>
<evidence type="ECO:0000255" key="1">
    <source>
        <dbReference type="HAMAP-Rule" id="MF_00249"/>
    </source>
</evidence>
<reference key="1">
    <citation type="journal article" date="2003" name="Proc. Natl. Acad. Sci. U.S.A.">
        <title>Complete genome sequence of Lactobacillus plantarum WCFS1.</title>
        <authorList>
            <person name="Kleerebezem M."/>
            <person name="Boekhorst J."/>
            <person name="van Kranenburg R."/>
            <person name="Molenaar D."/>
            <person name="Kuipers O.P."/>
            <person name="Leer R."/>
            <person name="Tarchini R."/>
            <person name="Peters S.A."/>
            <person name="Sandbrink H.M."/>
            <person name="Fiers M.W.E.J."/>
            <person name="Stiekema W."/>
            <person name="Klein Lankhorst R.M."/>
            <person name="Bron P.A."/>
            <person name="Hoffer S.M."/>
            <person name="Nierop Groot M.N."/>
            <person name="Kerkhoven R."/>
            <person name="De Vries M."/>
            <person name="Ursing B."/>
            <person name="De Vos W.M."/>
            <person name="Siezen R.J."/>
        </authorList>
    </citation>
    <scope>NUCLEOTIDE SEQUENCE [LARGE SCALE GENOMIC DNA]</scope>
    <source>
        <strain>ATCC BAA-793 / NCIMB 8826 / WCFS1</strain>
    </source>
</reference>
<reference key="2">
    <citation type="journal article" date="2012" name="J. Bacteriol.">
        <title>Complete resequencing and reannotation of the Lactobacillus plantarum WCFS1 genome.</title>
        <authorList>
            <person name="Siezen R.J."/>
            <person name="Francke C."/>
            <person name="Renckens B."/>
            <person name="Boekhorst J."/>
            <person name="Wels M."/>
            <person name="Kleerebezem M."/>
            <person name="van Hijum S.A."/>
        </authorList>
    </citation>
    <scope>NUCLEOTIDE SEQUENCE [LARGE SCALE GENOMIC DNA]</scope>
    <scope>GENOME REANNOTATION</scope>
    <source>
        <strain>ATCC BAA-793 / NCIMB 8826 / WCFS1</strain>
    </source>
</reference>
<name>HSLU_LACPL</name>
<dbReference type="EMBL" id="AL935263">
    <property type="protein sequence ID" value="CCC79118.1"/>
    <property type="molecule type" value="Genomic_DNA"/>
</dbReference>
<dbReference type="RefSeq" id="WP_003640560.1">
    <property type="nucleotide sequence ID" value="NC_004567.2"/>
</dbReference>
<dbReference type="RefSeq" id="YP_004889632.1">
    <property type="nucleotide sequence ID" value="NC_004567.2"/>
</dbReference>
<dbReference type="SMR" id="Q88W26"/>
<dbReference type="STRING" id="220668.lp_1845"/>
<dbReference type="EnsemblBacteria" id="CCC79118">
    <property type="protein sequence ID" value="CCC79118"/>
    <property type="gene ID" value="lp_1845"/>
</dbReference>
<dbReference type="GeneID" id="89669179"/>
<dbReference type="KEGG" id="lpl:lp_1845"/>
<dbReference type="PATRIC" id="fig|220668.9.peg.1555"/>
<dbReference type="eggNOG" id="COG1220">
    <property type="taxonomic scope" value="Bacteria"/>
</dbReference>
<dbReference type="HOGENOM" id="CLU_033123_0_0_9"/>
<dbReference type="OrthoDB" id="9804062at2"/>
<dbReference type="PhylomeDB" id="Q88W26"/>
<dbReference type="Proteomes" id="UP000000432">
    <property type="component" value="Chromosome"/>
</dbReference>
<dbReference type="GO" id="GO:0009376">
    <property type="term" value="C:HslUV protease complex"/>
    <property type="evidence" value="ECO:0007669"/>
    <property type="project" value="UniProtKB-UniRule"/>
</dbReference>
<dbReference type="GO" id="GO:0005524">
    <property type="term" value="F:ATP binding"/>
    <property type="evidence" value="ECO:0007669"/>
    <property type="project" value="UniProtKB-UniRule"/>
</dbReference>
<dbReference type="GO" id="GO:0016887">
    <property type="term" value="F:ATP hydrolysis activity"/>
    <property type="evidence" value="ECO:0007669"/>
    <property type="project" value="InterPro"/>
</dbReference>
<dbReference type="GO" id="GO:0008233">
    <property type="term" value="F:peptidase activity"/>
    <property type="evidence" value="ECO:0007669"/>
    <property type="project" value="InterPro"/>
</dbReference>
<dbReference type="GO" id="GO:0036402">
    <property type="term" value="F:proteasome-activating activity"/>
    <property type="evidence" value="ECO:0007669"/>
    <property type="project" value="UniProtKB-UniRule"/>
</dbReference>
<dbReference type="GO" id="GO:0043335">
    <property type="term" value="P:protein unfolding"/>
    <property type="evidence" value="ECO:0007669"/>
    <property type="project" value="UniProtKB-UniRule"/>
</dbReference>
<dbReference type="GO" id="GO:0051603">
    <property type="term" value="P:proteolysis involved in protein catabolic process"/>
    <property type="evidence" value="ECO:0007669"/>
    <property type="project" value="TreeGrafter"/>
</dbReference>
<dbReference type="FunFam" id="3.40.50.300:FF:000220">
    <property type="entry name" value="ATP-dependent protease ATPase subunit HslU"/>
    <property type="match status" value="1"/>
</dbReference>
<dbReference type="Gene3D" id="1.10.8.60">
    <property type="match status" value="1"/>
</dbReference>
<dbReference type="Gene3D" id="3.40.50.300">
    <property type="entry name" value="P-loop containing nucleotide triphosphate hydrolases"/>
    <property type="match status" value="2"/>
</dbReference>
<dbReference type="HAMAP" id="MF_00249">
    <property type="entry name" value="HslU"/>
    <property type="match status" value="1"/>
</dbReference>
<dbReference type="InterPro" id="IPR003593">
    <property type="entry name" value="AAA+_ATPase"/>
</dbReference>
<dbReference type="InterPro" id="IPR050052">
    <property type="entry name" value="ATP-dep_Clp_protease_ClpX"/>
</dbReference>
<dbReference type="InterPro" id="IPR003959">
    <property type="entry name" value="ATPase_AAA_core"/>
</dbReference>
<dbReference type="InterPro" id="IPR019489">
    <property type="entry name" value="Clp_ATPase_C"/>
</dbReference>
<dbReference type="InterPro" id="IPR004491">
    <property type="entry name" value="HslU"/>
</dbReference>
<dbReference type="InterPro" id="IPR027417">
    <property type="entry name" value="P-loop_NTPase"/>
</dbReference>
<dbReference type="NCBIfam" id="TIGR00390">
    <property type="entry name" value="hslU"/>
    <property type="match status" value="1"/>
</dbReference>
<dbReference type="NCBIfam" id="NF003544">
    <property type="entry name" value="PRK05201.1"/>
    <property type="match status" value="1"/>
</dbReference>
<dbReference type="PANTHER" id="PTHR48102">
    <property type="entry name" value="ATP-DEPENDENT CLP PROTEASE ATP-BINDING SUBUNIT CLPX-LIKE, MITOCHONDRIAL-RELATED"/>
    <property type="match status" value="1"/>
</dbReference>
<dbReference type="PANTHER" id="PTHR48102:SF3">
    <property type="entry name" value="ATP-DEPENDENT PROTEASE ATPASE SUBUNIT HSLU"/>
    <property type="match status" value="1"/>
</dbReference>
<dbReference type="Pfam" id="PF00004">
    <property type="entry name" value="AAA"/>
    <property type="match status" value="1"/>
</dbReference>
<dbReference type="Pfam" id="PF07724">
    <property type="entry name" value="AAA_2"/>
    <property type="match status" value="1"/>
</dbReference>
<dbReference type="SMART" id="SM00382">
    <property type="entry name" value="AAA"/>
    <property type="match status" value="1"/>
</dbReference>
<dbReference type="SMART" id="SM01086">
    <property type="entry name" value="ClpB_D2-small"/>
    <property type="match status" value="1"/>
</dbReference>
<dbReference type="SUPFAM" id="SSF52540">
    <property type="entry name" value="P-loop containing nucleoside triphosphate hydrolases"/>
    <property type="match status" value="1"/>
</dbReference>
<feature type="chain" id="PRO_0000160514" description="ATP-dependent protease ATPase subunit HslU">
    <location>
        <begin position="1"/>
        <end position="472"/>
    </location>
</feature>
<feature type="binding site" evidence="1">
    <location>
        <position position="20"/>
    </location>
    <ligand>
        <name>ATP</name>
        <dbReference type="ChEBI" id="CHEBI:30616"/>
    </ligand>
</feature>
<feature type="binding site" evidence="1">
    <location>
        <begin position="62"/>
        <end position="67"/>
    </location>
    <ligand>
        <name>ATP</name>
        <dbReference type="ChEBI" id="CHEBI:30616"/>
    </ligand>
</feature>
<feature type="binding site" evidence="1">
    <location>
        <position position="285"/>
    </location>
    <ligand>
        <name>ATP</name>
        <dbReference type="ChEBI" id="CHEBI:30616"/>
    </ligand>
</feature>
<feature type="binding site" evidence="1">
    <location>
        <position position="350"/>
    </location>
    <ligand>
        <name>ATP</name>
        <dbReference type="ChEBI" id="CHEBI:30616"/>
    </ligand>
</feature>
<feature type="binding site" evidence="1">
    <location>
        <position position="422"/>
    </location>
    <ligand>
        <name>ATP</name>
        <dbReference type="ChEBI" id="CHEBI:30616"/>
    </ligand>
</feature>
<gene>
    <name evidence="1" type="primary">hslU</name>
    <name type="ordered locus">lp_1845</name>
</gene>
<keyword id="KW-0067">ATP-binding</keyword>
<keyword id="KW-0143">Chaperone</keyword>
<keyword id="KW-0963">Cytoplasm</keyword>
<keyword id="KW-0547">Nucleotide-binding</keyword>
<keyword id="KW-1185">Reference proteome</keyword>
<protein>
    <recommendedName>
        <fullName evidence="1">ATP-dependent protease ATPase subunit HslU</fullName>
    </recommendedName>
    <alternativeName>
        <fullName evidence="1">Unfoldase HslU</fullName>
    </alternativeName>
</protein>